<keyword id="KW-0963">Cytoplasm</keyword>
<keyword id="KW-0378">Hydrolase</keyword>
<keyword id="KW-1185">Reference proteome</keyword>
<name>URE2_CUPNH</name>
<accession>Q0KCP7</accession>
<proteinExistence type="inferred from homology"/>
<reference key="1">
    <citation type="journal article" date="2006" name="Nat. Biotechnol.">
        <title>Genome sequence of the bioplastic-producing 'Knallgas' bacterium Ralstonia eutropha H16.</title>
        <authorList>
            <person name="Pohlmann A."/>
            <person name="Fricke W.F."/>
            <person name="Reinecke F."/>
            <person name="Kusian B."/>
            <person name="Liesegang H."/>
            <person name="Cramm R."/>
            <person name="Eitinger T."/>
            <person name="Ewering C."/>
            <person name="Poetter M."/>
            <person name="Schwartz E."/>
            <person name="Strittmatter A."/>
            <person name="Voss I."/>
            <person name="Gottschalk G."/>
            <person name="Steinbuechel A."/>
            <person name="Friedrich B."/>
            <person name="Bowien B."/>
        </authorList>
    </citation>
    <scope>NUCLEOTIDE SEQUENCE [LARGE SCALE GENOMIC DNA]</scope>
    <source>
        <strain>ATCC 17699 / DSM 428 / KCTC 22496 / NCIMB 10442 / H16 / Stanier 337</strain>
    </source>
</reference>
<gene>
    <name evidence="1" type="primary">ureB</name>
    <name type="ordered locus">H16_A1083</name>
</gene>
<evidence type="ECO:0000255" key="1">
    <source>
        <dbReference type="HAMAP-Rule" id="MF_01954"/>
    </source>
</evidence>
<feature type="chain" id="PRO_1000070764" description="Urease subunit beta">
    <location>
        <begin position="1"/>
        <end position="101"/>
    </location>
</feature>
<sequence>MIPGELMPADGEIELNAGRATVSVTVANTGDRPIQVGSHFHFYETNAALAFDRETARGFRLNIAAGTAVRFEPGQTRTVELVALDGDRIVYGFNGKIMGAL</sequence>
<protein>
    <recommendedName>
        <fullName evidence="1">Urease subunit beta</fullName>
        <ecNumber evidence="1">3.5.1.5</ecNumber>
    </recommendedName>
    <alternativeName>
        <fullName evidence="1">Urea amidohydrolase subunit beta</fullName>
    </alternativeName>
</protein>
<dbReference type="EC" id="3.5.1.5" evidence="1"/>
<dbReference type="EMBL" id="AM260479">
    <property type="protein sequence ID" value="CAJ92224.1"/>
    <property type="molecule type" value="Genomic_DNA"/>
</dbReference>
<dbReference type="RefSeq" id="WP_011614866.1">
    <property type="nucleotide sequence ID" value="NC_008313.1"/>
</dbReference>
<dbReference type="SMR" id="Q0KCP7"/>
<dbReference type="STRING" id="381666.H16_A1083"/>
<dbReference type="KEGG" id="reh:H16_A1083"/>
<dbReference type="eggNOG" id="COG0832">
    <property type="taxonomic scope" value="Bacteria"/>
</dbReference>
<dbReference type="HOGENOM" id="CLU_129707_1_1_4"/>
<dbReference type="OrthoDB" id="9797217at2"/>
<dbReference type="UniPathway" id="UPA00258">
    <property type="reaction ID" value="UER00370"/>
</dbReference>
<dbReference type="Proteomes" id="UP000008210">
    <property type="component" value="Chromosome 1"/>
</dbReference>
<dbReference type="GO" id="GO:0035550">
    <property type="term" value="C:urease complex"/>
    <property type="evidence" value="ECO:0007669"/>
    <property type="project" value="InterPro"/>
</dbReference>
<dbReference type="GO" id="GO:0009039">
    <property type="term" value="F:urease activity"/>
    <property type="evidence" value="ECO:0007669"/>
    <property type="project" value="UniProtKB-UniRule"/>
</dbReference>
<dbReference type="GO" id="GO:0043419">
    <property type="term" value="P:urea catabolic process"/>
    <property type="evidence" value="ECO:0007669"/>
    <property type="project" value="UniProtKB-UniRule"/>
</dbReference>
<dbReference type="CDD" id="cd00407">
    <property type="entry name" value="Urease_beta"/>
    <property type="match status" value="1"/>
</dbReference>
<dbReference type="FunFam" id="2.10.150.10:FF:000001">
    <property type="entry name" value="Urease subunit beta"/>
    <property type="match status" value="1"/>
</dbReference>
<dbReference type="Gene3D" id="2.10.150.10">
    <property type="entry name" value="Urease, beta subunit"/>
    <property type="match status" value="1"/>
</dbReference>
<dbReference type="HAMAP" id="MF_01954">
    <property type="entry name" value="Urease_beta"/>
    <property type="match status" value="1"/>
</dbReference>
<dbReference type="InterPro" id="IPR002019">
    <property type="entry name" value="Urease_beta-like"/>
</dbReference>
<dbReference type="InterPro" id="IPR036461">
    <property type="entry name" value="Urease_betasu_sf"/>
</dbReference>
<dbReference type="InterPro" id="IPR050069">
    <property type="entry name" value="Urease_subunit"/>
</dbReference>
<dbReference type="NCBIfam" id="NF009682">
    <property type="entry name" value="PRK13203.1"/>
    <property type="match status" value="1"/>
</dbReference>
<dbReference type="NCBIfam" id="TIGR00192">
    <property type="entry name" value="urease_beta"/>
    <property type="match status" value="1"/>
</dbReference>
<dbReference type="PANTHER" id="PTHR33569">
    <property type="entry name" value="UREASE"/>
    <property type="match status" value="1"/>
</dbReference>
<dbReference type="PANTHER" id="PTHR33569:SF1">
    <property type="entry name" value="UREASE"/>
    <property type="match status" value="1"/>
</dbReference>
<dbReference type="Pfam" id="PF00699">
    <property type="entry name" value="Urease_beta"/>
    <property type="match status" value="1"/>
</dbReference>
<dbReference type="SUPFAM" id="SSF51278">
    <property type="entry name" value="Urease, beta-subunit"/>
    <property type="match status" value="1"/>
</dbReference>
<organism>
    <name type="scientific">Cupriavidus necator (strain ATCC 17699 / DSM 428 / KCTC 22496 / NCIMB 10442 / H16 / Stanier 337)</name>
    <name type="common">Ralstonia eutropha</name>
    <dbReference type="NCBI Taxonomy" id="381666"/>
    <lineage>
        <taxon>Bacteria</taxon>
        <taxon>Pseudomonadati</taxon>
        <taxon>Pseudomonadota</taxon>
        <taxon>Betaproteobacteria</taxon>
        <taxon>Burkholderiales</taxon>
        <taxon>Burkholderiaceae</taxon>
        <taxon>Cupriavidus</taxon>
    </lineage>
</organism>
<comment type="catalytic activity">
    <reaction evidence="1">
        <text>urea + 2 H2O + H(+) = hydrogencarbonate + 2 NH4(+)</text>
        <dbReference type="Rhea" id="RHEA:20557"/>
        <dbReference type="ChEBI" id="CHEBI:15377"/>
        <dbReference type="ChEBI" id="CHEBI:15378"/>
        <dbReference type="ChEBI" id="CHEBI:16199"/>
        <dbReference type="ChEBI" id="CHEBI:17544"/>
        <dbReference type="ChEBI" id="CHEBI:28938"/>
        <dbReference type="EC" id="3.5.1.5"/>
    </reaction>
</comment>
<comment type="pathway">
    <text evidence="1">Nitrogen metabolism; urea degradation; CO(2) and NH(3) from urea (urease route): step 1/1.</text>
</comment>
<comment type="subunit">
    <text evidence="1">Heterotrimer of UreA (gamma), UreB (beta) and UreC (alpha) subunits. Three heterotrimers associate to form the active enzyme.</text>
</comment>
<comment type="subcellular location">
    <subcellularLocation>
        <location evidence="1">Cytoplasm</location>
    </subcellularLocation>
</comment>
<comment type="similarity">
    <text evidence="1">Belongs to the urease beta subunit family.</text>
</comment>